<comment type="function">
    <text evidence="4 5 6">Gluconolactonase with low activity towards other sugar lactones, including gulonolactone and galactonolactone. Catalyzes a key step in ascorbic acid (vitamin C) biosynthesis. Can also hydrolyze diisopropyl phosphorofluoridate and phenylacetate (in vitro). Calcium-binding protein. Modulates Ca(2+) signaling, and Ca(2+)-dependent cellular processes and enzyme activities.</text>
</comment>
<comment type="catalytic activity">
    <reaction evidence="5">
        <text>D-glucono-1,5-lactone + H2O = D-gluconate + H(+)</text>
        <dbReference type="Rhea" id="RHEA:10440"/>
        <dbReference type="ChEBI" id="CHEBI:15377"/>
        <dbReference type="ChEBI" id="CHEBI:15378"/>
        <dbReference type="ChEBI" id="CHEBI:16217"/>
        <dbReference type="ChEBI" id="CHEBI:18391"/>
        <dbReference type="EC" id="3.1.1.17"/>
    </reaction>
</comment>
<comment type="cofactor">
    <cofactor evidence="4 5">
        <name>Zn(2+)</name>
        <dbReference type="ChEBI" id="CHEBI:29105"/>
    </cofactor>
    <cofactor evidence="4 5">
        <name>Mn(2+)</name>
        <dbReference type="ChEBI" id="CHEBI:29035"/>
    </cofactor>
    <cofactor evidence="4 5">
        <name>Ca(2+)</name>
        <dbReference type="ChEBI" id="CHEBI:29108"/>
    </cofactor>
    <cofactor evidence="4 5">
        <name>Mg(2+)</name>
        <dbReference type="ChEBI" id="CHEBI:18420"/>
    </cofactor>
    <cofactor evidence="4 5">
        <name>Co(2+)</name>
        <dbReference type="ChEBI" id="CHEBI:48828"/>
    </cofactor>
    <text evidence="4 5">Binds 1 divalent metal cation per subunit. Most active with Zn(2+) and Mn(2+) ions. The physiological cofactor for gluconolactonase activity is most likely Ca(2+) or Mg(2+). Mg(2+), Mn(2+) and Co(2+) are equally efficient for the hydrolysis of diisopropyl phosphorofluoridate.</text>
</comment>
<comment type="biophysicochemical properties">
    <kinetics>
        <KM evidence="5">9.4 mM for gluconolactone</KM>
        <Vmax evidence="5">345.0 umol/min/mg enzyme</Vmax>
    </kinetics>
    <phDependence>
        <text evidence="5">Optimum pH is 6.4.</text>
    </phDependence>
</comment>
<comment type="pathway">
    <text evidence="5">Cofactor biosynthesis; L-ascorbate biosynthesis via UDP-alpha-D-glucuronate pathway; L-ascorbate from UDP-alpha-D-glucuronate: step 3/4.</text>
</comment>
<comment type="subunit">
    <text evidence="1">Monomer.</text>
</comment>
<comment type="subcellular location">
    <subcellularLocation>
        <location>Cytoplasm</location>
    </subcellularLocation>
</comment>
<comment type="tissue specificity">
    <text evidence="3 5 6">Detected in liver (at protein level). Hepatocytes and renal proximal tubular epithelium.</text>
</comment>
<comment type="developmental stage">
    <text>In liver, the first peak of expression was found in 5-day-old neonates. Expression increases from day 7 and reaches a plateau at day 10. 3-6.5 moth-old adults express about a third the amount of neonates level. In kidney, expression increases from day 21 and reaches a maximal level at day 35, remains high until 3 months of age.</text>
</comment>
<comment type="PTM">
    <text>The N-terminus is blocked.</text>
</comment>
<comment type="similarity">
    <text evidence="7">Belongs to the SMP-30/CGR1 family.</text>
</comment>
<keyword id="KW-0060">Ascorbate biosynthesis</keyword>
<keyword id="KW-0106">Calcium</keyword>
<keyword id="KW-0963">Cytoplasm</keyword>
<keyword id="KW-0903">Direct protein sequencing</keyword>
<keyword id="KW-0378">Hydrolase</keyword>
<keyword id="KW-0479">Metal-binding</keyword>
<keyword id="KW-0597">Phosphoprotein</keyword>
<keyword id="KW-1185">Reference proteome</keyword>
<dbReference type="EC" id="3.1.1.17"/>
<dbReference type="EMBL" id="X69021">
    <property type="protein sequence ID" value="CAA48786.1"/>
    <property type="molecule type" value="mRNA"/>
</dbReference>
<dbReference type="EMBL" id="D38467">
    <property type="protein sequence ID" value="BAA07490.1"/>
    <property type="molecule type" value="mRNA"/>
</dbReference>
<dbReference type="EMBL" id="AB037934">
    <property type="protein sequence ID" value="BAA90692.1"/>
    <property type="molecule type" value="mRNA"/>
</dbReference>
<dbReference type="EMBL" id="BC078794">
    <property type="protein sequence ID" value="AAH78794.1"/>
    <property type="molecule type" value="mRNA"/>
</dbReference>
<dbReference type="EMBL" id="D67070">
    <property type="protein sequence ID" value="BAA11083.1"/>
    <property type="molecule type" value="Genomic_DNA"/>
</dbReference>
<dbReference type="EMBL" id="D31662">
    <property type="protein sequence ID" value="BAA06507.1"/>
    <property type="molecule type" value="Genomic_DNA"/>
</dbReference>
<dbReference type="PIR" id="S34588">
    <property type="entry name" value="S34588"/>
</dbReference>
<dbReference type="RefSeq" id="NP_113734.1">
    <property type="nucleotide sequence ID" value="NM_031546.2"/>
</dbReference>
<dbReference type="SMR" id="Q03336"/>
<dbReference type="FunCoup" id="Q03336">
    <property type="interactions" value="265"/>
</dbReference>
<dbReference type="IntAct" id="Q03336">
    <property type="interactions" value="2"/>
</dbReference>
<dbReference type="STRING" id="10116.ENSRNOP00000010984"/>
<dbReference type="iPTMnet" id="Q03336"/>
<dbReference type="PhosphoSitePlus" id="Q03336"/>
<dbReference type="PaxDb" id="10116-ENSRNOP00000010984"/>
<dbReference type="Ensembl" id="ENSRNOT00000010984.6">
    <property type="protein sequence ID" value="ENSRNOP00000010984.4"/>
    <property type="gene ID" value="ENSRNOG00000007949.6"/>
</dbReference>
<dbReference type="GeneID" id="25106"/>
<dbReference type="KEGG" id="rno:25106"/>
<dbReference type="UCSC" id="RGD:3560">
    <property type="organism name" value="rat"/>
</dbReference>
<dbReference type="AGR" id="RGD:3560"/>
<dbReference type="CTD" id="9104"/>
<dbReference type="RGD" id="3560">
    <property type="gene designation" value="Rgn"/>
</dbReference>
<dbReference type="eggNOG" id="KOG4499">
    <property type="taxonomic scope" value="Eukaryota"/>
</dbReference>
<dbReference type="GeneTree" id="ENSGT00390000014995"/>
<dbReference type="HOGENOM" id="CLU_036110_3_2_1"/>
<dbReference type="InParanoid" id="Q03336"/>
<dbReference type="OMA" id="WAGTMRY"/>
<dbReference type="OrthoDB" id="423498at2759"/>
<dbReference type="PhylomeDB" id="Q03336"/>
<dbReference type="TreeFam" id="TF323663"/>
<dbReference type="BioCyc" id="MetaCyc:MONOMER-13233"/>
<dbReference type="BRENDA" id="3.1.8.2">
    <property type="organism ID" value="5301"/>
</dbReference>
<dbReference type="UniPathway" id="UPA00991">
    <property type="reaction ID" value="UER00938"/>
</dbReference>
<dbReference type="PRO" id="PR:Q03336"/>
<dbReference type="Proteomes" id="UP000002494">
    <property type="component" value="Chromosome X"/>
</dbReference>
<dbReference type="Bgee" id="ENSRNOG00000007949">
    <property type="expression patterns" value="Expressed in liver and 16 other cell types or tissues"/>
</dbReference>
<dbReference type="GO" id="GO:0005737">
    <property type="term" value="C:cytoplasm"/>
    <property type="evidence" value="ECO:0000250"/>
    <property type="project" value="UniProtKB"/>
</dbReference>
<dbReference type="GO" id="GO:0005634">
    <property type="term" value="C:nucleus"/>
    <property type="evidence" value="ECO:0000250"/>
    <property type="project" value="UniProtKB"/>
</dbReference>
<dbReference type="GO" id="GO:0005509">
    <property type="term" value="F:calcium ion binding"/>
    <property type="evidence" value="ECO:0000314"/>
    <property type="project" value="UniProtKB"/>
</dbReference>
<dbReference type="GO" id="GO:0030234">
    <property type="term" value="F:enzyme regulator activity"/>
    <property type="evidence" value="ECO:0007669"/>
    <property type="project" value="InterPro"/>
</dbReference>
<dbReference type="GO" id="GO:0004341">
    <property type="term" value="F:gluconolactonase activity"/>
    <property type="evidence" value="ECO:0000314"/>
    <property type="project" value="RGD"/>
</dbReference>
<dbReference type="GO" id="GO:0008270">
    <property type="term" value="F:zinc ion binding"/>
    <property type="evidence" value="ECO:0000250"/>
    <property type="project" value="UniProtKB"/>
</dbReference>
<dbReference type="GO" id="GO:0006874">
    <property type="term" value="P:intracellular calcium ion homeostasis"/>
    <property type="evidence" value="ECO:0000314"/>
    <property type="project" value="UniProtKB"/>
</dbReference>
<dbReference type="GO" id="GO:0001822">
    <property type="term" value="P:kidney development"/>
    <property type="evidence" value="ECO:0000270"/>
    <property type="project" value="RGD"/>
</dbReference>
<dbReference type="GO" id="GO:0019853">
    <property type="term" value="P:L-ascorbic acid biosynthetic process"/>
    <property type="evidence" value="ECO:0000250"/>
    <property type="project" value="UniProtKB"/>
</dbReference>
<dbReference type="GO" id="GO:0001889">
    <property type="term" value="P:liver development"/>
    <property type="evidence" value="ECO:0000270"/>
    <property type="project" value="RGD"/>
</dbReference>
<dbReference type="GO" id="GO:0097421">
    <property type="term" value="P:liver regeneration"/>
    <property type="evidence" value="ECO:0000270"/>
    <property type="project" value="RGD"/>
</dbReference>
<dbReference type="GO" id="GO:0043066">
    <property type="term" value="P:negative regulation of apoptotic process"/>
    <property type="evidence" value="ECO:0000314"/>
    <property type="project" value="RGD"/>
</dbReference>
<dbReference type="GO" id="GO:1903011">
    <property type="term" value="P:negative regulation of bone development"/>
    <property type="evidence" value="ECO:0000314"/>
    <property type="project" value="RGD"/>
</dbReference>
<dbReference type="GO" id="GO:2000279">
    <property type="term" value="P:negative regulation of DNA biosynthetic process"/>
    <property type="evidence" value="ECO:0000315"/>
    <property type="project" value="RGD"/>
</dbReference>
<dbReference type="GO" id="GO:1903625">
    <property type="term" value="P:negative regulation of DNA catabolic process"/>
    <property type="evidence" value="ECO:0000314"/>
    <property type="project" value="RGD"/>
</dbReference>
<dbReference type="GO" id="GO:0050680">
    <property type="term" value="P:negative regulation of epithelial cell proliferation"/>
    <property type="evidence" value="ECO:0000314"/>
    <property type="project" value="RGD"/>
</dbReference>
<dbReference type="GO" id="GO:1901318">
    <property type="term" value="P:negative regulation of flagellated sperm motility"/>
    <property type="evidence" value="ECO:0000314"/>
    <property type="project" value="RGD"/>
</dbReference>
<dbReference type="GO" id="GO:0010558">
    <property type="term" value="P:negative regulation of macromolecule biosynthetic process"/>
    <property type="evidence" value="ECO:0000314"/>
    <property type="project" value="RGD"/>
</dbReference>
<dbReference type="GO" id="GO:0045019">
    <property type="term" value="P:negative regulation of nitric oxide biosynthetic process"/>
    <property type="evidence" value="ECO:0000315"/>
    <property type="project" value="RGD"/>
</dbReference>
<dbReference type="GO" id="GO:1902679">
    <property type="term" value="P:negative regulation of RNA biosynthetic process"/>
    <property type="evidence" value="ECO:0000315"/>
    <property type="project" value="RGD"/>
</dbReference>
<dbReference type="GO" id="GO:0032781">
    <property type="term" value="P:positive regulation of ATP-dependent activity"/>
    <property type="evidence" value="ECO:0000314"/>
    <property type="project" value="UniProtKB"/>
</dbReference>
<dbReference type="GO" id="GO:0045723">
    <property type="term" value="P:positive regulation of fatty acid biosynthetic process"/>
    <property type="evidence" value="ECO:0000314"/>
    <property type="project" value="RGD"/>
</dbReference>
<dbReference type="GO" id="GO:0010907">
    <property type="term" value="P:positive regulation of glucose metabolic process"/>
    <property type="evidence" value="ECO:0000314"/>
    <property type="project" value="RGD"/>
</dbReference>
<dbReference type="GO" id="GO:1903052">
    <property type="term" value="P:positive regulation of proteolysis involved in protein catabolic process"/>
    <property type="evidence" value="ECO:0000314"/>
    <property type="project" value="RGD"/>
</dbReference>
<dbReference type="GO" id="GO:0010867">
    <property type="term" value="P:positive regulation of triglyceride biosynthetic process"/>
    <property type="evidence" value="ECO:0000314"/>
    <property type="project" value="RGD"/>
</dbReference>
<dbReference type="GO" id="GO:0050848">
    <property type="term" value="P:regulation of calcium-mediated signaling"/>
    <property type="evidence" value="ECO:0000314"/>
    <property type="project" value="UniProtKB"/>
</dbReference>
<dbReference type="GO" id="GO:0007283">
    <property type="term" value="P:spermatogenesis"/>
    <property type="evidence" value="ECO:0000314"/>
    <property type="project" value="RGD"/>
</dbReference>
<dbReference type="FunFam" id="2.120.10.30:FF:000027">
    <property type="entry name" value="Regucalcin homologue"/>
    <property type="match status" value="1"/>
</dbReference>
<dbReference type="Gene3D" id="2.120.10.30">
    <property type="entry name" value="TolB, C-terminal domain"/>
    <property type="match status" value="1"/>
</dbReference>
<dbReference type="InterPro" id="IPR011042">
    <property type="entry name" value="6-blade_b-propeller_TolB-like"/>
</dbReference>
<dbReference type="InterPro" id="IPR008367">
    <property type="entry name" value="Regucalcin"/>
</dbReference>
<dbReference type="InterPro" id="IPR013658">
    <property type="entry name" value="SGL"/>
</dbReference>
<dbReference type="InterPro" id="IPR005511">
    <property type="entry name" value="SMP-30"/>
</dbReference>
<dbReference type="PANTHER" id="PTHR10907">
    <property type="entry name" value="REGUCALCIN"/>
    <property type="match status" value="1"/>
</dbReference>
<dbReference type="PANTHER" id="PTHR10907:SF54">
    <property type="entry name" value="REGUCALCIN"/>
    <property type="match status" value="1"/>
</dbReference>
<dbReference type="Pfam" id="PF08450">
    <property type="entry name" value="SGL"/>
    <property type="match status" value="1"/>
</dbReference>
<dbReference type="PRINTS" id="PR01791">
    <property type="entry name" value="REGUCALCIN"/>
</dbReference>
<dbReference type="PRINTS" id="PR01790">
    <property type="entry name" value="SMP30FAMILY"/>
</dbReference>
<dbReference type="SUPFAM" id="SSF63829">
    <property type="entry name" value="Calcium-dependent phosphotriesterase"/>
    <property type="match status" value="1"/>
</dbReference>
<reference key="1">
    <citation type="journal article" date="1992" name="Biochim. Biophys. Acta">
        <title>Isolation of cDNA clone encoding rat senescence marker protein-30 (SMP30) and its tissue distribution.</title>
        <authorList>
            <person name="Fujita T."/>
            <person name="Shirasawa T."/>
            <person name="Uchida K."/>
            <person name="Maruyama N."/>
        </authorList>
    </citation>
    <scope>NUCLEOTIDE SEQUENCE [MRNA]</scope>
    <scope>PARTIAL PROTEIN SEQUENCE</scope>
    <scope>TISSUE SPECIFICITY</scope>
    <source>
        <strain>Wistar</strain>
        <tissue>Liver</tissue>
    </source>
</reference>
<reference key="2">
    <citation type="journal article" date="1993" name="FEBS Lett.">
        <title>Molecular cloning and sequencing of the cDNA coding for a calcium-binding protein regucalcin from rat liver.</title>
        <authorList>
            <person name="Shimokawa N."/>
            <person name="Yamaguchi M."/>
        </authorList>
    </citation>
    <scope>NUCLEOTIDE SEQUENCE [MRNA]</scope>
    <source>
        <strain>Wistar</strain>
        <tissue>Liver</tissue>
    </source>
</reference>
<reference key="3">
    <citation type="submission" date="2000-02" db="EMBL/GenBank/DDBJ databases">
        <title>The gene family encoding the calcium-binding protein regucalcin.</title>
        <authorList>
            <person name="Misawa H."/>
            <person name="Yamaguchi M."/>
        </authorList>
    </citation>
    <scope>NUCLEOTIDE SEQUENCE [MRNA]</scope>
</reference>
<reference key="4">
    <citation type="journal article" date="2004" name="Genome Res.">
        <title>The status, quality, and expansion of the NIH full-length cDNA project: the Mammalian Gene Collection (MGC).</title>
        <authorList>
            <consortium name="The MGC Project Team"/>
        </authorList>
    </citation>
    <scope>NUCLEOTIDE SEQUENCE [LARGE SCALE MRNA]</scope>
    <source>
        <tissue>Kidney</tissue>
    </source>
</reference>
<reference key="5">
    <citation type="journal article" date="1996" name="Mol. Cell. Biochem.">
        <title>The 5' end sequences and exon organization in rat regucalcin gene.</title>
        <authorList>
            <person name="Yamaguchi M."/>
            <person name="Makino R."/>
            <person name="Shimokawa N."/>
        </authorList>
    </citation>
    <scope>NUCLEOTIDE SEQUENCE [GENOMIC DNA] OF 1-115</scope>
    <source>
        <strain>Sprague-Dawley</strain>
    </source>
</reference>
<reference key="6">
    <citation type="journal article" date="1995" name="Mol. Cell. Biochem.">
        <title>Genomic cloning and chromosomal assignment of rat regucalcin gene.</title>
        <authorList>
            <person name="Shimokawa N."/>
            <person name="Matsuda Y."/>
            <person name="Yamaguchi M."/>
        </authorList>
    </citation>
    <scope>NUCLEOTIDE SEQUENCE [GENOMIC DNA] OF 117-299</scope>
    <source>
        <strain>Sprague-Dawley</strain>
        <tissue>Kidney</tissue>
    </source>
</reference>
<reference key="7">
    <citation type="journal article" date="2006" name="Proc. Natl. Acad. Sci. U.S.A.">
        <title>Senescence marker protein 30 functions as gluconolactonase in L-ascorbic acid biosynthesis, and its knockout mice are prone to scurvy.</title>
        <authorList>
            <person name="Kondo Y."/>
            <person name="Inai Y."/>
            <person name="Sato Y."/>
            <person name="Handa S."/>
            <person name="Kubo S."/>
            <person name="Shimokado K."/>
            <person name="Goto S."/>
            <person name="Nishikimi M."/>
            <person name="Maruyama N."/>
            <person name="Ishigami A."/>
        </authorList>
    </citation>
    <scope>PROTEIN SEQUENCE OF 113-124</scope>
    <scope>FUNCTION</scope>
    <scope>CATALYTIC ACTIVITY</scope>
    <scope>COFACTOR</scope>
    <scope>PATHWAY</scope>
    <scope>BIOPHYSICOCHEMICAL PROPERTIES</scope>
    <scope>TISSUE SPECIFICITY</scope>
</reference>
<reference key="8">
    <citation type="journal article" date="1996" name="Mech. Ageing Dev.">
        <title>Gene regulation of senescence marker protein-30 (SMP30): coordinated up-regulation with tissue maturation and gradual down-regulation with aging.</title>
        <authorList>
            <person name="Fujita T."/>
            <person name="Shirasawa T."/>
            <person name="Uchida K."/>
            <person name="Maruyama N."/>
        </authorList>
    </citation>
    <scope>FUNCTION</scope>
    <scope>TISSUE SPECIFICITY</scope>
</reference>
<reference key="9">
    <citation type="journal article" date="2004" name="FEBS Lett.">
        <title>Senescence marker protein-30 is a unique enzyme that hydrolyzes diisopropyl phosphorofluoridate in the liver.</title>
        <authorList>
            <person name="Kondo Y."/>
            <person name="Ishigami A."/>
            <person name="Kubo S."/>
            <person name="Handa S."/>
            <person name="Gomi K."/>
            <person name="Hirokawa K."/>
            <person name="Kajiyama N."/>
            <person name="Chiba T."/>
            <person name="Shimokado K."/>
            <person name="Maruyama N."/>
        </authorList>
    </citation>
    <scope>FUNCTION</scope>
    <scope>COFACTOR</scope>
</reference>
<reference key="10">
    <citation type="journal article" date="2012" name="Nat. Commun.">
        <title>Quantitative maps of protein phosphorylation sites across 14 different rat organs and tissues.</title>
        <authorList>
            <person name="Lundby A."/>
            <person name="Secher A."/>
            <person name="Lage K."/>
            <person name="Nordsborg N.B."/>
            <person name="Dmytriyev A."/>
            <person name="Lundby C."/>
            <person name="Olsen J.V."/>
        </authorList>
    </citation>
    <scope>PHOSPHORYLATION [LARGE SCALE ANALYSIS] AT SER-268</scope>
    <scope>IDENTIFICATION BY MASS SPECTROMETRY [LARGE SCALE ANALYSIS]</scope>
</reference>
<organism>
    <name type="scientific">Rattus norvegicus</name>
    <name type="common">Rat</name>
    <dbReference type="NCBI Taxonomy" id="10116"/>
    <lineage>
        <taxon>Eukaryota</taxon>
        <taxon>Metazoa</taxon>
        <taxon>Chordata</taxon>
        <taxon>Craniata</taxon>
        <taxon>Vertebrata</taxon>
        <taxon>Euteleostomi</taxon>
        <taxon>Mammalia</taxon>
        <taxon>Eutheria</taxon>
        <taxon>Euarchontoglires</taxon>
        <taxon>Glires</taxon>
        <taxon>Rodentia</taxon>
        <taxon>Myomorpha</taxon>
        <taxon>Muroidea</taxon>
        <taxon>Muridae</taxon>
        <taxon>Murinae</taxon>
        <taxon>Rattus</taxon>
    </lineage>
</organism>
<accession>Q03336</accession>
<accession>Q63496</accession>
<accession>Q925W3</accession>
<accession>Q9QWP2</accession>
<gene>
    <name type="primary">Rgn</name>
    <name type="synonym">Smp30</name>
</gene>
<feature type="chain" id="PRO_0000173049" description="Regucalcin">
    <location>
        <begin position="1"/>
        <end position="299"/>
    </location>
</feature>
<feature type="active site" description="Proton donor/acceptor" evidence="1">
    <location>
        <position position="204"/>
    </location>
</feature>
<feature type="binding site" evidence="1">
    <location>
        <position position="18"/>
    </location>
    <ligand>
        <name>a divalent metal cation</name>
        <dbReference type="ChEBI" id="CHEBI:60240"/>
    </ligand>
</feature>
<feature type="binding site" evidence="1">
    <location>
        <position position="101"/>
    </location>
    <ligand>
        <name>substrate</name>
    </ligand>
</feature>
<feature type="binding site" evidence="1">
    <location>
        <position position="103"/>
    </location>
    <ligand>
        <name>substrate</name>
    </ligand>
</feature>
<feature type="binding site" evidence="1">
    <location>
        <position position="121"/>
    </location>
    <ligand>
        <name>substrate</name>
    </ligand>
</feature>
<feature type="binding site" evidence="1">
    <location>
        <position position="154"/>
    </location>
    <ligand>
        <name>a divalent metal cation</name>
        <dbReference type="ChEBI" id="CHEBI:60240"/>
    </ligand>
</feature>
<feature type="binding site" evidence="1">
    <location>
        <position position="204"/>
    </location>
    <ligand>
        <name>a divalent metal cation</name>
        <dbReference type="ChEBI" id="CHEBI:60240"/>
    </ligand>
</feature>
<feature type="modified residue" description="N6-succinyllysine" evidence="2">
    <location>
        <position position="144"/>
    </location>
</feature>
<feature type="modified residue" description="N6-succinyllysine" evidence="2">
    <location>
        <position position="244"/>
    </location>
</feature>
<feature type="modified residue" description="N6-succinyllysine" evidence="2">
    <location>
        <position position="253"/>
    </location>
</feature>
<feature type="modified residue" description="Phosphoserine" evidence="8">
    <location>
        <position position="268"/>
    </location>
</feature>
<feature type="sequence conflict" description="In Ref. 2; BAA07490 and 6; BAA06507." evidence="7" ref="2 6">
    <original>D</original>
    <variation>N</variation>
    <location>
        <position position="148"/>
    </location>
</feature>
<protein>
    <recommendedName>
        <fullName>Regucalcin</fullName>
        <shortName>RC</shortName>
    </recommendedName>
    <alternativeName>
        <fullName>Gluconolactonase</fullName>
        <shortName>GNL</shortName>
        <ecNumber>3.1.1.17</ecNumber>
    </alternativeName>
    <alternativeName>
        <fullName>Senescence marker protein 30</fullName>
        <shortName>SMP-30</shortName>
    </alternativeName>
</protein>
<name>RGN_RAT</name>
<proteinExistence type="evidence at protein level"/>
<evidence type="ECO:0000250" key="1"/>
<evidence type="ECO:0000250" key="2">
    <source>
        <dbReference type="UniProtKB" id="Q64374"/>
    </source>
</evidence>
<evidence type="ECO:0000269" key="3">
    <source>
    </source>
</evidence>
<evidence type="ECO:0000269" key="4">
    <source>
    </source>
</evidence>
<evidence type="ECO:0000269" key="5">
    <source>
    </source>
</evidence>
<evidence type="ECO:0000269" key="6">
    <source>
    </source>
</evidence>
<evidence type="ECO:0000305" key="7"/>
<evidence type="ECO:0007744" key="8">
    <source>
    </source>
</evidence>
<sequence>MSSIKIECVLRENYRCGESPVWEEASKCLLFVDIPSKTVCRWDSISNRVQRVGVDAPVSSVALRQSGGYVATIGTKFCALNWEDQSVFILAMVDEDKKNNRFNDGKVDPAGRYFAGTMAEETAPAVLERHQGSLYSLFPDHSVKKYFDQVDISNGLDWSLDHKIFYYIDSLSYTVDAFDYDLPTGQISNRRTVYKMEKDEQIPDGMCIDVEGKLWVACYNGGRVIRLDPETGKRLQTVKLPVDKTTSCCFGGKDYSEMYVTCARDGMSAEGLLRQPDAGNIFKITGLGVKGIAPYSYAG</sequence>